<keyword id="KW-0002">3D-structure</keyword>
<keyword id="KW-0131">Cell cycle</keyword>
<keyword id="KW-0132">Cell division</keyword>
<keyword id="KW-0133">Cell shape</keyword>
<keyword id="KW-0175">Coiled coil</keyword>
<keyword id="KW-0963">Cytoplasm</keyword>
<reference key="1">
    <citation type="journal article" date="2005" name="J. Bacteriol.">
        <title>Insights on evolution of virulence and resistance from the complete genome analysis of an early methicillin-resistant Staphylococcus aureus strain and a biofilm-producing methicillin-resistant Staphylococcus epidermidis strain.</title>
        <authorList>
            <person name="Gill S.R."/>
            <person name="Fouts D.E."/>
            <person name="Archer G.L."/>
            <person name="Mongodin E.F."/>
            <person name="DeBoy R.T."/>
            <person name="Ravel J."/>
            <person name="Paulsen I.T."/>
            <person name="Kolonay J.F."/>
            <person name="Brinkac L.M."/>
            <person name="Beanan M.J."/>
            <person name="Dodson R.J."/>
            <person name="Daugherty S.C."/>
            <person name="Madupu R."/>
            <person name="Angiuoli S.V."/>
            <person name="Durkin A.S."/>
            <person name="Haft D.H."/>
            <person name="Vamathevan J.J."/>
            <person name="Khouri H."/>
            <person name="Utterback T.R."/>
            <person name="Lee C."/>
            <person name="Dimitrov G."/>
            <person name="Jiang L."/>
            <person name="Qin H."/>
            <person name="Weidman J."/>
            <person name="Tran K."/>
            <person name="Kang K.H."/>
            <person name="Hance I.R."/>
            <person name="Nelson K.E."/>
            <person name="Fraser C.M."/>
        </authorList>
    </citation>
    <scope>NUCLEOTIDE SEQUENCE [LARGE SCALE GENOMIC DNA]</scope>
    <source>
        <strain>COL</strain>
    </source>
</reference>
<organism>
    <name type="scientific">Staphylococcus aureus (strain COL)</name>
    <dbReference type="NCBI Taxonomy" id="93062"/>
    <lineage>
        <taxon>Bacteria</taxon>
        <taxon>Bacillati</taxon>
        <taxon>Bacillota</taxon>
        <taxon>Bacilli</taxon>
        <taxon>Bacillales</taxon>
        <taxon>Staphylococcaceae</taxon>
        <taxon>Staphylococcus</taxon>
    </lineage>
</organism>
<comment type="function">
    <text evidence="1">Divisome component that associates with the complex late in its assembly, after the Z-ring is formed, and is dependent on DivIC and PBP2B for its recruitment to the divisome. Together with EzrA, is a key component of the system that regulates PBP1 localization during cell cycle progression. Its main role could be the removal of PBP1 from the cell pole after pole maturation is completed. Also contributes to the recruitment of PBP1 to the division complex. Not essential for septum formation.</text>
</comment>
<comment type="subunit">
    <text evidence="1">Forms polymers through the coiled coil domains. Interacts with PBP1, MreC and EzrA.</text>
</comment>
<comment type="subcellular location">
    <subcellularLocation>
        <location evidence="1">Cytoplasm</location>
    </subcellularLocation>
    <text evidence="1">Shuttles between the lateral wall and the division site in a cell cycle-dependent manner.</text>
</comment>
<comment type="similarity">
    <text evidence="1">Belongs to the GpsB family.</text>
</comment>
<gene>
    <name evidence="1" type="primary">gpsB</name>
    <name type="ordered locus">SACOL1484</name>
</gene>
<accession>Q5HFX8</accession>
<protein>
    <recommendedName>
        <fullName evidence="1">Cell cycle protein GpsB</fullName>
    </recommendedName>
    <alternativeName>
        <fullName evidence="1">Guiding PBP1-shuttling protein</fullName>
    </alternativeName>
</protein>
<sequence>MSDVSLKLSAKDIYEKDFEKTMARGYRREEVDAFLDDIIADYQKMADMNNEVVKLSEENHKLKKELEELRLRVATSRPQDNKSFSSNNTTTNTSSNNVDILKRISNLEKAVFGK</sequence>
<evidence type="ECO:0000255" key="1">
    <source>
        <dbReference type="HAMAP-Rule" id="MF_02011"/>
    </source>
</evidence>
<evidence type="ECO:0000256" key="2">
    <source>
        <dbReference type="SAM" id="MobiDB-lite"/>
    </source>
</evidence>
<proteinExistence type="evidence at protein level"/>
<feature type="chain" id="PRO_0000337932" description="Cell cycle protein GpsB">
    <location>
        <begin position="1"/>
        <end position="114"/>
    </location>
</feature>
<feature type="region of interest" description="Disordered" evidence="2">
    <location>
        <begin position="74"/>
        <end position="99"/>
    </location>
</feature>
<feature type="coiled-coil region" evidence="1">
    <location>
        <begin position="42"/>
        <end position="77"/>
    </location>
</feature>
<feature type="compositionally biased region" description="Low complexity" evidence="2">
    <location>
        <begin position="85"/>
        <end position="97"/>
    </location>
</feature>
<name>GPSB_STAAC</name>
<dbReference type="EMBL" id="CP000046">
    <property type="protein sequence ID" value="AAW36680.1"/>
    <property type="molecule type" value="Genomic_DNA"/>
</dbReference>
<dbReference type="RefSeq" id="WP_001286320.1">
    <property type="nucleotide sequence ID" value="NZ_JBGOFO010000003.1"/>
</dbReference>
<dbReference type="PDB" id="8E2B">
    <property type="method" value="X-ray"/>
    <property type="resolution" value="1.95 A"/>
    <property type="chains" value="A/B/C/D=1-70"/>
</dbReference>
<dbReference type="PDB" id="8E2C">
    <property type="method" value="X-ray"/>
    <property type="resolution" value="2.40 A"/>
    <property type="chains" value="A/B=1-70"/>
</dbReference>
<dbReference type="PDBsum" id="8E2B"/>
<dbReference type="PDBsum" id="8E2C"/>
<dbReference type="SMR" id="Q5HFX8"/>
<dbReference type="GeneID" id="98345812"/>
<dbReference type="KEGG" id="sac:SACOL1484"/>
<dbReference type="HOGENOM" id="CLU_140309_1_0_9"/>
<dbReference type="Proteomes" id="UP000000530">
    <property type="component" value="Chromosome"/>
</dbReference>
<dbReference type="GO" id="GO:0005737">
    <property type="term" value="C:cytoplasm"/>
    <property type="evidence" value="ECO:0007669"/>
    <property type="project" value="UniProtKB-SubCell"/>
</dbReference>
<dbReference type="GO" id="GO:0051301">
    <property type="term" value="P:cell division"/>
    <property type="evidence" value="ECO:0007669"/>
    <property type="project" value="UniProtKB-UniRule"/>
</dbReference>
<dbReference type="GO" id="GO:0008360">
    <property type="term" value="P:regulation of cell shape"/>
    <property type="evidence" value="ECO:0007669"/>
    <property type="project" value="UniProtKB-UniRule"/>
</dbReference>
<dbReference type="Gene3D" id="6.10.250.660">
    <property type="match status" value="1"/>
</dbReference>
<dbReference type="HAMAP" id="MF_02011">
    <property type="entry name" value="GpsB"/>
    <property type="match status" value="1"/>
</dbReference>
<dbReference type="InterPro" id="IPR011229">
    <property type="entry name" value="Cell_cycle_GpsB"/>
</dbReference>
<dbReference type="InterPro" id="IPR019933">
    <property type="entry name" value="DivIVA_domain"/>
</dbReference>
<dbReference type="InterPro" id="IPR007793">
    <property type="entry name" value="DivIVA_fam"/>
</dbReference>
<dbReference type="NCBIfam" id="TIGR03544">
    <property type="entry name" value="DivI1A_domain"/>
    <property type="match status" value="1"/>
</dbReference>
<dbReference type="NCBIfam" id="NF010725">
    <property type="entry name" value="PRK14127.1"/>
    <property type="match status" value="1"/>
</dbReference>
<dbReference type="PANTHER" id="PTHR35794:SF1">
    <property type="entry name" value="CELL CYCLE PROTEIN GPSB"/>
    <property type="match status" value="1"/>
</dbReference>
<dbReference type="PANTHER" id="PTHR35794">
    <property type="entry name" value="CELL DIVISION PROTEIN DIVIVA"/>
    <property type="match status" value="1"/>
</dbReference>
<dbReference type="Pfam" id="PF05103">
    <property type="entry name" value="DivIVA"/>
    <property type="match status" value="1"/>
</dbReference>
<dbReference type="PIRSF" id="PIRSF029938">
    <property type="entry name" value="UCP029938"/>
    <property type="match status" value="1"/>
</dbReference>